<keyword id="KW-0001">2Fe-2S</keyword>
<keyword id="KW-0004">4Fe-4S</keyword>
<keyword id="KW-0007">Acetylation</keyword>
<keyword id="KW-0249">Electron transport</keyword>
<keyword id="KW-0408">Iron</keyword>
<keyword id="KW-0411">Iron-sulfur</keyword>
<keyword id="KW-0472">Membrane</keyword>
<keyword id="KW-0479">Metal-binding</keyword>
<keyword id="KW-0496">Mitochondrion</keyword>
<keyword id="KW-0999">Mitochondrion inner membrane</keyword>
<keyword id="KW-0520">NAD</keyword>
<keyword id="KW-0560">Oxidoreductase</keyword>
<keyword id="KW-1185">Reference proteome</keyword>
<keyword id="KW-0679">Respiratory chain</keyword>
<keyword id="KW-0809">Transit peptide</keyword>
<keyword id="KW-1278">Translocase</keyword>
<keyword id="KW-0813">Transport</keyword>
<keyword id="KW-0830">Ubiquinone</keyword>
<accession>Q0MQG1</accession>
<evidence type="ECO:0000250" key="1">
    <source>
        <dbReference type="UniProtKB" id="P15690"/>
    </source>
</evidence>
<evidence type="ECO:0000250" key="2">
    <source>
        <dbReference type="UniProtKB" id="P28331"/>
    </source>
</evidence>
<evidence type="ECO:0000250" key="3">
    <source>
        <dbReference type="UniProtKB" id="Q56223"/>
    </source>
</evidence>
<evidence type="ECO:0000250" key="4">
    <source>
        <dbReference type="UniProtKB" id="Q91VD9"/>
    </source>
</evidence>
<evidence type="ECO:0000255" key="5">
    <source>
        <dbReference type="PROSITE-ProRule" id="PRU00465"/>
    </source>
</evidence>
<evidence type="ECO:0000255" key="6">
    <source>
        <dbReference type="PROSITE-ProRule" id="PRU01004"/>
    </source>
</evidence>
<evidence type="ECO:0000255" key="7">
    <source>
        <dbReference type="PROSITE-ProRule" id="PRU01184"/>
    </source>
</evidence>
<evidence type="ECO:0000305" key="8"/>
<name>NDUS1_GORGO</name>
<dbReference type="EC" id="7.1.1.2" evidence="2"/>
<dbReference type="EMBL" id="DQ885673">
    <property type="protein sequence ID" value="ABH12182.1"/>
    <property type="molecule type" value="mRNA"/>
</dbReference>
<dbReference type="RefSeq" id="NP_001266520.1">
    <property type="nucleotide sequence ID" value="NM_001279591.1"/>
</dbReference>
<dbReference type="STRING" id="9593.ENSGGOP00000028060"/>
<dbReference type="GeneID" id="101139264"/>
<dbReference type="CTD" id="4719"/>
<dbReference type="eggNOG" id="KOG2282">
    <property type="taxonomic scope" value="Eukaryota"/>
</dbReference>
<dbReference type="InParanoid" id="Q0MQG1"/>
<dbReference type="Proteomes" id="UP000001519">
    <property type="component" value="Unplaced"/>
</dbReference>
<dbReference type="GO" id="GO:0005743">
    <property type="term" value="C:mitochondrial inner membrane"/>
    <property type="evidence" value="ECO:0000250"/>
    <property type="project" value="UniProtKB"/>
</dbReference>
<dbReference type="GO" id="GO:0005758">
    <property type="term" value="C:mitochondrial intermembrane space"/>
    <property type="evidence" value="ECO:0000250"/>
    <property type="project" value="UniProtKB"/>
</dbReference>
<dbReference type="GO" id="GO:0005739">
    <property type="term" value="C:mitochondrion"/>
    <property type="evidence" value="ECO:0000250"/>
    <property type="project" value="UniProtKB"/>
</dbReference>
<dbReference type="GO" id="GO:0045271">
    <property type="term" value="C:respiratory chain complex I"/>
    <property type="evidence" value="ECO:0000250"/>
    <property type="project" value="UniProtKB"/>
</dbReference>
<dbReference type="GO" id="GO:0051537">
    <property type="term" value="F:2 iron, 2 sulfur cluster binding"/>
    <property type="evidence" value="ECO:0007669"/>
    <property type="project" value="UniProtKB-KW"/>
</dbReference>
<dbReference type="GO" id="GO:0051539">
    <property type="term" value="F:4 iron, 4 sulfur cluster binding"/>
    <property type="evidence" value="ECO:0007669"/>
    <property type="project" value="UniProtKB-KW"/>
</dbReference>
<dbReference type="GO" id="GO:0046872">
    <property type="term" value="F:metal ion binding"/>
    <property type="evidence" value="ECO:0007669"/>
    <property type="project" value="UniProtKB-KW"/>
</dbReference>
<dbReference type="GO" id="GO:0008137">
    <property type="term" value="F:NADH dehydrogenase (ubiquinone) activity"/>
    <property type="evidence" value="ECO:0000250"/>
    <property type="project" value="UniProtKB"/>
</dbReference>
<dbReference type="GO" id="GO:0006120">
    <property type="term" value="P:mitochondrial electron transport, NADH to ubiquinone"/>
    <property type="evidence" value="ECO:0000250"/>
    <property type="project" value="UniProtKB"/>
</dbReference>
<dbReference type="GO" id="GO:0032981">
    <property type="term" value="P:mitochondrial respiratory chain complex I assembly"/>
    <property type="evidence" value="ECO:0000250"/>
    <property type="project" value="UniProtKB"/>
</dbReference>
<dbReference type="CDD" id="cd00207">
    <property type="entry name" value="fer2"/>
    <property type="match status" value="1"/>
</dbReference>
<dbReference type="CDD" id="cd02773">
    <property type="entry name" value="MopB_Res-Cmplx1_Nad11"/>
    <property type="match status" value="1"/>
</dbReference>
<dbReference type="FunFam" id="3.10.20.740:FF:000001">
    <property type="entry name" value="NADH-quinone oxidoreductase subunit G"/>
    <property type="match status" value="1"/>
</dbReference>
<dbReference type="FunFam" id="3.30.200.210:FF:000002">
    <property type="entry name" value="NADH-ubiquinone oxidoreductase 75 kDa subunit"/>
    <property type="match status" value="1"/>
</dbReference>
<dbReference type="FunFam" id="3.30.70.20:FF:000002">
    <property type="entry name" value="NADH-ubiquinone oxidoreductase 75 kDa subunit"/>
    <property type="match status" value="1"/>
</dbReference>
<dbReference type="FunFam" id="3.40.50.740:FF:000002">
    <property type="entry name" value="NADH-ubiquinone oxidoreductase 75 kDa subunit, mitochondrial"/>
    <property type="match status" value="1"/>
</dbReference>
<dbReference type="Gene3D" id="3.10.20.740">
    <property type="match status" value="1"/>
</dbReference>
<dbReference type="Gene3D" id="3.30.200.210">
    <property type="match status" value="1"/>
</dbReference>
<dbReference type="Gene3D" id="3.30.70.20">
    <property type="match status" value="1"/>
</dbReference>
<dbReference type="Gene3D" id="3.40.50.740">
    <property type="match status" value="1"/>
</dbReference>
<dbReference type="InterPro" id="IPR036010">
    <property type="entry name" value="2Fe-2S_ferredoxin-like_sf"/>
</dbReference>
<dbReference type="InterPro" id="IPR001041">
    <property type="entry name" value="2Fe-2S_ferredoxin-type"/>
</dbReference>
<dbReference type="InterPro" id="IPR006656">
    <property type="entry name" value="Mopterin_OxRdtase"/>
</dbReference>
<dbReference type="InterPro" id="IPR006963">
    <property type="entry name" value="Mopterin_OxRdtase_4Fe-4S_dom"/>
</dbReference>
<dbReference type="InterPro" id="IPR000283">
    <property type="entry name" value="NADH_UbQ_OxRdtase_75kDa_su_CS"/>
</dbReference>
<dbReference type="InterPro" id="IPR054351">
    <property type="entry name" value="NADH_UbQ_OxRdtase_ferredoxin"/>
</dbReference>
<dbReference type="InterPro" id="IPR010228">
    <property type="entry name" value="NADH_UbQ_OxRdtase_Gsu"/>
</dbReference>
<dbReference type="InterPro" id="IPR019574">
    <property type="entry name" value="NADH_UbQ_OxRdtase_Gsu_4Fe4S-bd"/>
</dbReference>
<dbReference type="InterPro" id="IPR015405">
    <property type="entry name" value="NDUFS1-like_C"/>
</dbReference>
<dbReference type="InterPro" id="IPR050123">
    <property type="entry name" value="Prok_molybdopt-oxidoreductase"/>
</dbReference>
<dbReference type="NCBIfam" id="TIGR01973">
    <property type="entry name" value="NuoG"/>
    <property type="match status" value="1"/>
</dbReference>
<dbReference type="PANTHER" id="PTHR43105:SF13">
    <property type="entry name" value="NADH-UBIQUINONE OXIDOREDUCTASE 75 KDA SUBUNIT, MITOCHONDRIAL"/>
    <property type="match status" value="1"/>
</dbReference>
<dbReference type="PANTHER" id="PTHR43105">
    <property type="entry name" value="RESPIRATORY NITRATE REDUCTASE"/>
    <property type="match status" value="1"/>
</dbReference>
<dbReference type="Pfam" id="PF13510">
    <property type="entry name" value="Fer2_4"/>
    <property type="match status" value="1"/>
</dbReference>
<dbReference type="Pfam" id="PF22151">
    <property type="entry name" value="Fer4_NDSU1"/>
    <property type="match status" value="1"/>
</dbReference>
<dbReference type="Pfam" id="PF22117">
    <property type="entry name" value="Fer4_Nqo3"/>
    <property type="match status" value="1"/>
</dbReference>
<dbReference type="Pfam" id="PF00384">
    <property type="entry name" value="Molybdopterin"/>
    <property type="match status" value="1"/>
</dbReference>
<dbReference type="Pfam" id="PF10588">
    <property type="entry name" value="NADH-G_4Fe-4S_3"/>
    <property type="match status" value="1"/>
</dbReference>
<dbReference type="Pfam" id="PF09326">
    <property type="entry name" value="NADH_dhqG_C"/>
    <property type="match status" value="1"/>
</dbReference>
<dbReference type="SMART" id="SM00929">
    <property type="entry name" value="NADH-G_4Fe-4S_3"/>
    <property type="match status" value="1"/>
</dbReference>
<dbReference type="SUPFAM" id="SSF54292">
    <property type="entry name" value="2Fe-2S ferredoxin-like"/>
    <property type="match status" value="1"/>
</dbReference>
<dbReference type="SUPFAM" id="SSF54862">
    <property type="entry name" value="4Fe-4S ferredoxins"/>
    <property type="match status" value="1"/>
</dbReference>
<dbReference type="SUPFAM" id="SSF53706">
    <property type="entry name" value="Formate dehydrogenase/DMSO reductase, domains 1-3"/>
    <property type="match status" value="1"/>
</dbReference>
<dbReference type="PROSITE" id="PS51085">
    <property type="entry name" value="2FE2S_FER_2"/>
    <property type="match status" value="1"/>
</dbReference>
<dbReference type="PROSITE" id="PS51839">
    <property type="entry name" value="4FE4S_HC3"/>
    <property type="match status" value="1"/>
</dbReference>
<dbReference type="PROSITE" id="PS51669">
    <property type="entry name" value="4FE4S_MOW_BIS_MGD"/>
    <property type="match status" value="1"/>
</dbReference>
<dbReference type="PROSITE" id="PS00641">
    <property type="entry name" value="COMPLEX1_75K_1"/>
    <property type="match status" value="1"/>
</dbReference>
<dbReference type="PROSITE" id="PS00642">
    <property type="entry name" value="COMPLEX1_75K_2"/>
    <property type="match status" value="1"/>
</dbReference>
<dbReference type="PROSITE" id="PS00643">
    <property type="entry name" value="COMPLEX1_75K_3"/>
    <property type="match status" value="1"/>
</dbReference>
<comment type="function">
    <text evidence="2">Core subunit of the mitochondrial membrane respiratory chain NADH dehydrogenase (Complex I) which catalyzes electron transfer from NADH through the respiratory chain, using ubiquinone as an electron acceptor (By similarity). Essential for catalysing the entry and efficient transfer of electrons within complex I (By similarity). Plays a key role in the assembly and stability of complex I and participates in the association of complex I with ubiquinol-cytochrome reductase complex (Complex III) to form supercomplexes (By similarity).</text>
</comment>
<comment type="catalytic activity">
    <reaction evidence="2">
        <text>a ubiquinone + NADH + 5 H(+)(in) = a ubiquinol + NAD(+) + 4 H(+)(out)</text>
        <dbReference type="Rhea" id="RHEA:29091"/>
        <dbReference type="Rhea" id="RHEA-COMP:9565"/>
        <dbReference type="Rhea" id="RHEA-COMP:9566"/>
        <dbReference type="ChEBI" id="CHEBI:15378"/>
        <dbReference type="ChEBI" id="CHEBI:16389"/>
        <dbReference type="ChEBI" id="CHEBI:17976"/>
        <dbReference type="ChEBI" id="CHEBI:57540"/>
        <dbReference type="ChEBI" id="CHEBI:57945"/>
        <dbReference type="EC" id="7.1.1.2"/>
    </reaction>
</comment>
<comment type="cofactor">
    <cofactor evidence="3">
        <name>[2Fe-2S] cluster</name>
        <dbReference type="ChEBI" id="CHEBI:190135"/>
    </cofactor>
    <text evidence="3">Binds 1 [2Fe-2S] cluster per subunit.</text>
</comment>
<comment type="cofactor">
    <cofactor evidence="3">
        <name>[4Fe-4S] cluster</name>
        <dbReference type="ChEBI" id="CHEBI:49883"/>
    </cofactor>
    <text evidence="3">Binds 2 [4Fe-4S] clusters per subunit.</text>
</comment>
<comment type="subunit">
    <text evidence="1 2 4">Core subunit of respiratory chain NADH dehydrogenase (Complex I) which is composed of 45 different subunits (By similarity). This is the largest subunit of complex I and it is a component of the iron-sulfur (IP) fragment of the enzyme (By similarity). Complex I associates with ubiquinol-cytochrome reductase complex (Complex III) to form supercomplexes (By similarity). Interacts with MDM2 and AKAP1 (By similarity).</text>
</comment>
<comment type="subcellular location">
    <subcellularLocation>
        <location evidence="1">Mitochondrion inner membrane</location>
        <topology evidence="1">Peripheral membrane protein</topology>
        <orientation evidence="1">Matrix side</orientation>
    </subcellularLocation>
</comment>
<comment type="similarity">
    <text evidence="8">Belongs to the complex I 75 kDa subunit family.</text>
</comment>
<feature type="transit peptide" description="Mitochondrion" evidence="1">
    <location>
        <begin position="1"/>
        <end position="23"/>
    </location>
</feature>
<feature type="chain" id="PRO_0000251853" description="NADH-ubiquinone oxidoreductase 75 kDa subunit, mitochondrial">
    <location>
        <begin position="24"/>
        <end position="727"/>
    </location>
</feature>
<feature type="domain" description="2Fe-2S ferredoxin-type" evidence="5">
    <location>
        <begin position="30"/>
        <end position="108"/>
    </location>
</feature>
<feature type="domain" description="4Fe-4S His(Cys)3-ligated-type" evidence="7">
    <location>
        <begin position="108"/>
        <end position="147"/>
    </location>
</feature>
<feature type="domain" description="4Fe-4S Mo/W bis-MGD-type" evidence="6">
    <location>
        <begin position="245"/>
        <end position="301"/>
    </location>
</feature>
<feature type="binding site" evidence="3">
    <location>
        <position position="64"/>
    </location>
    <ligand>
        <name>[2Fe-2S] cluster</name>
        <dbReference type="ChEBI" id="CHEBI:190135"/>
    </ligand>
</feature>
<feature type="binding site" evidence="3">
    <location>
        <position position="75"/>
    </location>
    <ligand>
        <name>[2Fe-2S] cluster</name>
        <dbReference type="ChEBI" id="CHEBI:190135"/>
    </ligand>
</feature>
<feature type="binding site" evidence="3">
    <location>
        <position position="78"/>
    </location>
    <ligand>
        <name>[2Fe-2S] cluster</name>
        <dbReference type="ChEBI" id="CHEBI:190135"/>
    </ligand>
</feature>
<feature type="binding site" evidence="3">
    <location>
        <position position="92"/>
    </location>
    <ligand>
        <name>[2Fe-2S] cluster</name>
        <dbReference type="ChEBI" id="CHEBI:190135"/>
    </ligand>
</feature>
<feature type="binding site" evidence="7">
    <location>
        <position position="124"/>
    </location>
    <ligand>
        <name>[4Fe-4S] cluster</name>
        <dbReference type="ChEBI" id="CHEBI:49883"/>
        <label>1</label>
    </ligand>
</feature>
<feature type="binding site" evidence="7">
    <location>
        <position position="128"/>
    </location>
    <ligand>
        <name>[4Fe-4S] cluster</name>
        <dbReference type="ChEBI" id="CHEBI:49883"/>
        <label>1</label>
    </ligand>
</feature>
<feature type="binding site" evidence="7">
    <location>
        <position position="131"/>
    </location>
    <ligand>
        <name>[4Fe-4S] cluster</name>
        <dbReference type="ChEBI" id="CHEBI:49883"/>
        <label>1</label>
    </ligand>
</feature>
<feature type="binding site" evidence="7">
    <location>
        <position position="137"/>
    </location>
    <ligand>
        <name>[4Fe-4S] cluster</name>
        <dbReference type="ChEBI" id="CHEBI:49883"/>
        <label>1</label>
    </ligand>
</feature>
<feature type="binding site" evidence="3">
    <location>
        <position position="176"/>
    </location>
    <ligand>
        <name>[4Fe-4S] cluster</name>
        <dbReference type="ChEBI" id="CHEBI:49883"/>
        <label>2</label>
    </ligand>
</feature>
<feature type="binding site" evidence="3">
    <location>
        <position position="179"/>
    </location>
    <ligand>
        <name>[4Fe-4S] cluster</name>
        <dbReference type="ChEBI" id="CHEBI:49883"/>
        <label>2</label>
    </ligand>
</feature>
<feature type="binding site" evidence="3">
    <location>
        <position position="182"/>
    </location>
    <ligand>
        <name>[4Fe-4S] cluster</name>
        <dbReference type="ChEBI" id="CHEBI:49883"/>
        <label>2</label>
    </ligand>
</feature>
<feature type="binding site" evidence="3">
    <location>
        <position position="226"/>
    </location>
    <ligand>
        <name>[4Fe-4S] cluster</name>
        <dbReference type="ChEBI" id="CHEBI:49883"/>
        <label>2</label>
    </ligand>
</feature>
<feature type="modified residue" description="N6-acetyllysine" evidence="4">
    <location>
        <position position="84"/>
    </location>
</feature>
<feature type="modified residue" description="N6-acetyllysine" evidence="4">
    <location>
        <position position="467"/>
    </location>
</feature>
<feature type="modified residue" description="N6-acetyllysine" evidence="4">
    <location>
        <position position="499"/>
    </location>
</feature>
<feature type="modified residue" description="N6-acetyllysine" evidence="4">
    <location>
        <position position="709"/>
    </location>
</feature>
<reference key="1">
    <citation type="journal article" date="2006" name="Gene">
        <title>Adaptive selection of mitochondrial complex I subunits during primate radiation.</title>
        <authorList>
            <person name="Mishmar D."/>
            <person name="Ruiz-Pesini E."/>
            <person name="Mondragon-Palomino M."/>
            <person name="Procaccio V."/>
            <person name="Gaut B."/>
            <person name="Wallace D.C."/>
        </authorList>
    </citation>
    <scope>NUCLEOTIDE SEQUENCE [MRNA]</scope>
</reference>
<protein>
    <recommendedName>
        <fullName>NADH-ubiquinone oxidoreductase 75 kDa subunit, mitochondrial</fullName>
        <ecNumber evidence="2">7.1.1.2</ecNumber>
    </recommendedName>
    <alternativeName>
        <fullName>Complex I-75kD</fullName>
        <shortName>CI-75kD</shortName>
    </alternativeName>
</protein>
<gene>
    <name type="primary">NDUFS1</name>
</gene>
<sequence length="727" mass="79450">MLRIPVRKALVGLSKSPKGCVRTTATAASNLIEVFVDGQSVMVEPGTTVLQACEKVGMQIPRFCYHERLSVAGNCRMCLVEIEKAPKVVAACAMPVMKGWNILTNSEKSKKAREGVMEFLLANHPLDCPICDQGGECDLQDQSMMFGNDRSRFLEGKRAVEDKNIGPLVKTIMTRCIQCTRCIRFASEIAGVDDLGTTGRGNDMQVGTYIEKMFMSELSGNIIDICPVGALTSKPYAFTARPWETRKTESIDVMDAVGSNIVVSTRTGEVMRILPRMHEDINEXWISDKTRFAYDGLKRQRLTEPMVRNEKGLLTYTSWEDALSRVAGMLQSFQGKDVAAIAGGLVDAEALVALKDLLNRVDSDTLCTEEVFPTAGAGTDLRSNYLLNTTIAGVEEADVVLLVGTNPRFEAPLFNARIRKSWLHNDLKVALIGSPVDLTYTYDHLGDSPKILQDIASGSHPFSQVLKEAKKPMVVLGSSALQRNDGAAILAAVSSIAQKIRMTSGVTGDWKVMNILHRIASQVAALDLGYKPGVEAIRKNPPKVLFLLGADGGCITRQDLPKDCFIIYQGHHGDVGAPIADVILPGAAYTEKSATYVNTEGRAQQTKVAVTPPGLAREDWKIIRALSEIAGMTLPYDTLDQVRNRLEEVSPNLVRYDDIEGANYFQQANELSKLVNQQLLADPLVPPQLTIKDFYMTDSISRASQTMAKCVKAVTEGAQAVEEPSIC</sequence>
<organism>
    <name type="scientific">Gorilla gorilla gorilla</name>
    <name type="common">Western lowland gorilla</name>
    <dbReference type="NCBI Taxonomy" id="9595"/>
    <lineage>
        <taxon>Eukaryota</taxon>
        <taxon>Metazoa</taxon>
        <taxon>Chordata</taxon>
        <taxon>Craniata</taxon>
        <taxon>Vertebrata</taxon>
        <taxon>Euteleostomi</taxon>
        <taxon>Mammalia</taxon>
        <taxon>Eutheria</taxon>
        <taxon>Euarchontoglires</taxon>
        <taxon>Primates</taxon>
        <taxon>Haplorrhini</taxon>
        <taxon>Catarrhini</taxon>
        <taxon>Hominidae</taxon>
        <taxon>Gorilla</taxon>
    </lineage>
</organism>
<proteinExistence type="evidence at transcript level"/>